<comment type="function">
    <text evidence="1">Catalyzes the synthesis of alpha-ribazole-5'-phosphate from nicotinate mononucleotide (NAMN) and 5,6-dimethylbenzimidazole (DMB).</text>
</comment>
<comment type="catalytic activity">
    <reaction evidence="1">
        <text>5,6-dimethylbenzimidazole + nicotinate beta-D-ribonucleotide = alpha-ribazole 5'-phosphate + nicotinate + H(+)</text>
        <dbReference type="Rhea" id="RHEA:11196"/>
        <dbReference type="ChEBI" id="CHEBI:15378"/>
        <dbReference type="ChEBI" id="CHEBI:15890"/>
        <dbReference type="ChEBI" id="CHEBI:32544"/>
        <dbReference type="ChEBI" id="CHEBI:57502"/>
        <dbReference type="ChEBI" id="CHEBI:57918"/>
        <dbReference type="EC" id="2.4.2.21"/>
    </reaction>
</comment>
<comment type="pathway">
    <text evidence="1">Nucleoside biosynthesis; alpha-ribazole biosynthesis; alpha-ribazole from 5,6-dimethylbenzimidazole: step 1/2.</text>
</comment>
<comment type="subunit">
    <text evidence="1">Homodimer.</text>
</comment>
<comment type="similarity">
    <text evidence="1">Belongs to the CobT family.</text>
</comment>
<protein>
    <recommendedName>
        <fullName evidence="1">Nicotinate-nucleotide--dimethylbenzimidazole phosphoribosyltransferase</fullName>
        <shortName evidence="1">NN:DBI PRT</shortName>
        <ecNumber evidence="1">2.4.2.21</ecNumber>
    </recommendedName>
    <alternativeName>
        <fullName evidence="1">N(1)-alpha-phosphoribosyltransferase</fullName>
    </alternativeName>
</protein>
<organism>
    <name type="scientific">Salmonella heidelberg (strain SL476)</name>
    <dbReference type="NCBI Taxonomy" id="454169"/>
    <lineage>
        <taxon>Bacteria</taxon>
        <taxon>Pseudomonadati</taxon>
        <taxon>Pseudomonadota</taxon>
        <taxon>Gammaproteobacteria</taxon>
        <taxon>Enterobacterales</taxon>
        <taxon>Enterobacteriaceae</taxon>
        <taxon>Salmonella</taxon>
    </lineage>
</organism>
<proteinExistence type="inferred from homology"/>
<accession>B4T8W8</accession>
<dbReference type="EC" id="2.4.2.21" evidence="1"/>
<dbReference type="EMBL" id="CP001120">
    <property type="protein sequence ID" value="ACF66256.1"/>
    <property type="molecule type" value="Genomic_DNA"/>
</dbReference>
<dbReference type="RefSeq" id="WP_001193983.1">
    <property type="nucleotide sequence ID" value="NC_011083.1"/>
</dbReference>
<dbReference type="SMR" id="B4T8W8"/>
<dbReference type="KEGG" id="seh:SeHA_C2238"/>
<dbReference type="HOGENOM" id="CLU_002982_0_0_6"/>
<dbReference type="UniPathway" id="UPA00061">
    <property type="reaction ID" value="UER00516"/>
</dbReference>
<dbReference type="Proteomes" id="UP000001866">
    <property type="component" value="Chromosome"/>
</dbReference>
<dbReference type="GO" id="GO:0008939">
    <property type="term" value="F:nicotinate-nucleotide-dimethylbenzimidazole phosphoribosyltransferase activity"/>
    <property type="evidence" value="ECO:0007669"/>
    <property type="project" value="UniProtKB-UniRule"/>
</dbReference>
<dbReference type="GO" id="GO:0009236">
    <property type="term" value="P:cobalamin biosynthetic process"/>
    <property type="evidence" value="ECO:0007669"/>
    <property type="project" value="UniProtKB-KW"/>
</dbReference>
<dbReference type="CDD" id="cd02439">
    <property type="entry name" value="DMB-PRT_CobT"/>
    <property type="match status" value="1"/>
</dbReference>
<dbReference type="FunFam" id="1.10.1610.10:FF:000001">
    <property type="entry name" value="Nicotinate-nucleotide--dimethylbenzimidazole phosphoribosyltransferase"/>
    <property type="match status" value="1"/>
</dbReference>
<dbReference type="FunFam" id="3.40.50.10210:FF:000001">
    <property type="entry name" value="Nicotinate-nucleotide--dimethylbenzimidazole phosphoribosyltransferase"/>
    <property type="match status" value="1"/>
</dbReference>
<dbReference type="Gene3D" id="1.10.1610.10">
    <property type="match status" value="1"/>
</dbReference>
<dbReference type="Gene3D" id="3.40.50.10210">
    <property type="match status" value="1"/>
</dbReference>
<dbReference type="HAMAP" id="MF_00230">
    <property type="entry name" value="CobT"/>
    <property type="match status" value="1"/>
</dbReference>
<dbReference type="InterPro" id="IPR003200">
    <property type="entry name" value="Nict_dMeBzImd_PRibTrfase"/>
</dbReference>
<dbReference type="InterPro" id="IPR017846">
    <property type="entry name" value="Nict_dMeBzImd_PRibTrfase_bact"/>
</dbReference>
<dbReference type="InterPro" id="IPR023195">
    <property type="entry name" value="Nict_dMeBzImd_PRibTrfase_N"/>
</dbReference>
<dbReference type="InterPro" id="IPR036087">
    <property type="entry name" value="Nict_dMeBzImd_PRibTrfase_sf"/>
</dbReference>
<dbReference type="NCBIfam" id="TIGR03160">
    <property type="entry name" value="cobT_DBIPRT"/>
    <property type="match status" value="1"/>
</dbReference>
<dbReference type="NCBIfam" id="NF000996">
    <property type="entry name" value="PRK00105.1"/>
    <property type="match status" value="1"/>
</dbReference>
<dbReference type="PANTHER" id="PTHR43463">
    <property type="entry name" value="NICOTINATE-NUCLEOTIDE--DIMETHYLBENZIMIDAZOLE PHOSPHORIBOSYLTRANSFERASE"/>
    <property type="match status" value="1"/>
</dbReference>
<dbReference type="PANTHER" id="PTHR43463:SF1">
    <property type="entry name" value="NICOTINATE-NUCLEOTIDE--DIMETHYLBENZIMIDAZOLE PHOSPHORIBOSYLTRANSFERASE"/>
    <property type="match status" value="1"/>
</dbReference>
<dbReference type="Pfam" id="PF02277">
    <property type="entry name" value="DBI_PRT"/>
    <property type="match status" value="1"/>
</dbReference>
<dbReference type="SUPFAM" id="SSF52733">
    <property type="entry name" value="Nicotinate mononucleotide:5,6-dimethylbenzimidazole phosphoribosyltransferase (CobT)"/>
    <property type="match status" value="1"/>
</dbReference>
<reference key="1">
    <citation type="journal article" date="2011" name="J. Bacteriol.">
        <title>Comparative genomics of 28 Salmonella enterica isolates: evidence for CRISPR-mediated adaptive sublineage evolution.</title>
        <authorList>
            <person name="Fricke W.F."/>
            <person name="Mammel M.K."/>
            <person name="McDermott P.F."/>
            <person name="Tartera C."/>
            <person name="White D.G."/>
            <person name="Leclerc J.E."/>
            <person name="Ravel J."/>
            <person name="Cebula T.A."/>
        </authorList>
    </citation>
    <scope>NUCLEOTIDE SEQUENCE [LARGE SCALE GENOMIC DNA]</scope>
    <source>
        <strain>SL476</strain>
    </source>
</reference>
<evidence type="ECO:0000255" key="1">
    <source>
        <dbReference type="HAMAP-Rule" id="MF_00230"/>
    </source>
</evidence>
<sequence>MQTLHALLRDIPAPDAEAMARAQQHIDGLLKPPGSLGRLETLAVQLAGMPGLNGTPQVGEKAVLVMCADHGVWDEGVAVSPKIVTAIQAANMTRGTTGVCVLAAQAGAKVHVIDVGIDAEPIPGVVNMRVARGCGNIAVGPAMSRLQAEALLLEVSRYTCDLAQRGVTLFGVGELGMANTTPAAAMVSVFTGSDAKEVVGIGANLPPSRIDNKVDVVRRAIAINQPNPRDGIDVLSKVGGFDLVGMTGVMLGAARCGLPVLLDGFLSYSAALAACQIAPAVRPYLIPSHFSAEKGARIALAHLSMEPYLHMAMRLGEGSGAALAMPIVEAACAMFHNMGELAASNIVLPEGNANAT</sequence>
<name>COBT_SALHS</name>
<keyword id="KW-0169">Cobalamin biosynthesis</keyword>
<keyword id="KW-0328">Glycosyltransferase</keyword>
<keyword id="KW-0808">Transferase</keyword>
<gene>
    <name evidence="1" type="primary">cobT</name>
    <name type="ordered locus">SeHA_C2238</name>
</gene>
<feature type="chain" id="PRO_1000100477" description="Nicotinate-nucleotide--dimethylbenzimidazole phosphoribosyltransferase">
    <location>
        <begin position="1"/>
        <end position="356"/>
    </location>
</feature>
<feature type="active site" description="Proton acceptor" evidence="1">
    <location>
        <position position="317"/>
    </location>
</feature>